<gene>
    <name type="primary">VAC8</name>
    <name type="ORF">FGRRES_08997</name>
    <name type="ORF">FGSG_08997</name>
</gene>
<sequence length="559" mass="60829">MGICSSTCCGGRARDGLYEPVLADSEREAVADLLQYLENRGETDFFSGEPLRALSTLVFSENIDLQRSASLTFAEITERDVREVDRDTLEPILFLLQSPDIEVQRAASAALGNLAVDTENKVLIVQLGGLTPLIRQMMSPNVEVQCNAVGCITNLATHEENKAKIARSGALGPLTRLAKSRDMRVQRNATGALLNMTHSDENRQQLVNAGAIPVLVQLLSSPDVDVQYYCTTALSNIAVDASNRRKLAQSEPKLVQSLVNLMDSTSPKVQCQAALALRNLASDEKYQLDIVRANGLHPLLRLLQSSYLPLILSAVACIRNISIHPMNESPIIETNFLKPLVDLLGSTDNEEIQCHAISTLRNLAASSDRNKALVLDAGAVQKCKQLVLDVPITVQSEMTAAIAVLALSDDLKSHLLNLGVCGVLIPLTHSPSIEVQGNSAAALGNLSSKVGDYSIFVQNWTEPQGGIHGYLCRFLQSGDATFQHIAVWTLLQLFESEDKTLIGLIGKAEDIIEHIRSIANRQIEPDNEFEDEDEGEVVNLAQRCLELLGQSMSKAHIEG</sequence>
<dbReference type="EMBL" id="DS231668">
    <property type="protein sequence ID" value="ESU15511.1"/>
    <property type="molecule type" value="Genomic_DNA"/>
</dbReference>
<dbReference type="EMBL" id="HG970335">
    <property type="protein sequence ID" value="CEF84303.1"/>
    <property type="molecule type" value="Genomic_DNA"/>
</dbReference>
<dbReference type="RefSeq" id="XP_011328805.1">
    <property type="nucleotide sequence ID" value="XM_011330503.1"/>
</dbReference>
<dbReference type="SMR" id="Q4I1B1"/>
<dbReference type="FunCoup" id="Q4I1B1">
    <property type="interactions" value="122"/>
</dbReference>
<dbReference type="STRING" id="229533.Q4I1B1"/>
<dbReference type="GeneID" id="23555966"/>
<dbReference type="KEGG" id="fgr:FGSG_08997"/>
<dbReference type="VEuPathDB" id="FungiDB:FGRAMPH1_01G28157"/>
<dbReference type="eggNOG" id="KOG4224">
    <property type="taxonomic scope" value="Eukaryota"/>
</dbReference>
<dbReference type="HOGENOM" id="CLU_021483_0_0_1"/>
<dbReference type="InParanoid" id="Q4I1B1"/>
<dbReference type="OrthoDB" id="71119at110618"/>
<dbReference type="Proteomes" id="UP000070720">
    <property type="component" value="Chromosome 4"/>
</dbReference>
<dbReference type="GO" id="GO:0000329">
    <property type="term" value="C:fungal-type vacuole membrane"/>
    <property type="evidence" value="ECO:0007669"/>
    <property type="project" value="TreeGrafter"/>
</dbReference>
<dbReference type="GO" id="GO:0043495">
    <property type="term" value="F:protein-membrane adaptor activity"/>
    <property type="evidence" value="ECO:0007669"/>
    <property type="project" value="InterPro"/>
</dbReference>
<dbReference type="GO" id="GO:0000045">
    <property type="term" value="P:autophagosome assembly"/>
    <property type="evidence" value="ECO:0007669"/>
    <property type="project" value="TreeGrafter"/>
</dbReference>
<dbReference type="GO" id="GO:0071562">
    <property type="term" value="P:nucleus-vacuole junction assembly"/>
    <property type="evidence" value="ECO:0007669"/>
    <property type="project" value="InterPro"/>
</dbReference>
<dbReference type="FunFam" id="1.25.10.10:FF:000243">
    <property type="entry name" value="Putative Vacuolar protein 8"/>
    <property type="match status" value="1"/>
</dbReference>
<dbReference type="FunFam" id="1.25.10.10:FF:000095">
    <property type="entry name" value="Vacuolar protein 8"/>
    <property type="match status" value="1"/>
</dbReference>
<dbReference type="Gene3D" id="1.25.10.10">
    <property type="entry name" value="Leucine-rich Repeat Variant"/>
    <property type="match status" value="2"/>
</dbReference>
<dbReference type="InterPro" id="IPR011989">
    <property type="entry name" value="ARM-like"/>
</dbReference>
<dbReference type="InterPro" id="IPR016024">
    <property type="entry name" value="ARM-type_fold"/>
</dbReference>
<dbReference type="InterPro" id="IPR000225">
    <property type="entry name" value="Armadillo"/>
</dbReference>
<dbReference type="InterPro" id="IPR045156">
    <property type="entry name" value="Vac8"/>
</dbReference>
<dbReference type="PANTHER" id="PTHR47249">
    <property type="entry name" value="VACUOLAR PROTEIN 8"/>
    <property type="match status" value="1"/>
</dbReference>
<dbReference type="PANTHER" id="PTHR47249:SF1">
    <property type="entry name" value="VACUOLAR PROTEIN 8"/>
    <property type="match status" value="1"/>
</dbReference>
<dbReference type="Pfam" id="PF00514">
    <property type="entry name" value="Arm"/>
    <property type="match status" value="7"/>
</dbReference>
<dbReference type="SMART" id="SM00185">
    <property type="entry name" value="ARM"/>
    <property type="match status" value="9"/>
</dbReference>
<dbReference type="SUPFAM" id="SSF48371">
    <property type="entry name" value="ARM repeat"/>
    <property type="match status" value="1"/>
</dbReference>
<dbReference type="PROSITE" id="PS50176">
    <property type="entry name" value="ARM_REPEAT"/>
    <property type="match status" value="7"/>
</dbReference>
<organism>
    <name type="scientific">Gibberella zeae (strain ATCC MYA-4620 / CBS 123657 / FGSC 9075 / NRRL 31084 / PH-1)</name>
    <name type="common">Wheat head blight fungus</name>
    <name type="synonym">Fusarium graminearum</name>
    <dbReference type="NCBI Taxonomy" id="229533"/>
    <lineage>
        <taxon>Eukaryota</taxon>
        <taxon>Fungi</taxon>
        <taxon>Dikarya</taxon>
        <taxon>Ascomycota</taxon>
        <taxon>Pezizomycotina</taxon>
        <taxon>Sordariomycetes</taxon>
        <taxon>Hypocreomycetidae</taxon>
        <taxon>Hypocreales</taxon>
        <taxon>Nectriaceae</taxon>
        <taxon>Fusarium</taxon>
    </lineage>
</organism>
<feature type="initiator methionine" description="Removed" evidence="1">
    <location>
        <position position="1"/>
    </location>
</feature>
<feature type="chain" id="PRO_0000256213" description="Vacuolar protein 8">
    <location>
        <begin position="2"/>
        <end position="559"/>
    </location>
</feature>
<feature type="repeat" description="ARM 1">
    <location>
        <begin position="77"/>
        <end position="116"/>
    </location>
</feature>
<feature type="repeat" description="ARM 2">
    <location>
        <begin position="118"/>
        <end position="157"/>
    </location>
</feature>
<feature type="repeat" description="ARM 3">
    <location>
        <begin position="159"/>
        <end position="198"/>
    </location>
</feature>
<feature type="repeat" description="ARM 4">
    <location>
        <begin position="200"/>
        <end position="239"/>
    </location>
</feature>
<feature type="repeat" description="ARM 5">
    <location>
        <begin position="243"/>
        <end position="282"/>
    </location>
</feature>
<feature type="repeat" description="ARM 6">
    <location>
        <begin position="284"/>
        <end position="323"/>
    </location>
</feature>
<feature type="repeat" description="ARM 7">
    <location>
        <begin position="325"/>
        <end position="365"/>
    </location>
</feature>
<feature type="repeat" description="ARM 8">
    <location>
        <begin position="409"/>
        <end position="448"/>
    </location>
</feature>
<feature type="lipid moiety-binding region" description="N-myristoyl glycine" evidence="1">
    <location>
        <position position="2"/>
    </location>
</feature>
<feature type="lipid moiety-binding region" description="S-palmitoyl cysteine" evidence="2">
    <location>
        <position position="4"/>
    </location>
</feature>
<accession>Q4I1B1</accession>
<accession>A0A0E0SCZ0</accession>
<accession>I1RXD1</accession>
<accession>V6RM33</accession>
<keyword id="KW-0449">Lipoprotein</keyword>
<keyword id="KW-0472">Membrane</keyword>
<keyword id="KW-0519">Myristate</keyword>
<keyword id="KW-0564">Palmitate</keyword>
<keyword id="KW-1185">Reference proteome</keyword>
<keyword id="KW-0677">Repeat</keyword>
<keyword id="KW-0926">Vacuole</keyword>
<comment type="function">
    <text evidence="1">Functions in both vacuole inheritance and protein targeting from the cytoplasm to vacuole.</text>
</comment>
<comment type="subcellular location">
    <subcellularLocation>
        <location evidence="1">Vacuole membrane</location>
        <topology evidence="1">Lipid-anchor</topology>
    </subcellularLocation>
</comment>
<comment type="similarity">
    <text evidence="3">Belongs to the beta-catenin family.</text>
</comment>
<name>VAC8_GIBZE</name>
<reference key="1">
    <citation type="journal article" date="2007" name="Science">
        <title>The Fusarium graminearum genome reveals a link between localized polymorphism and pathogen specialization.</title>
        <authorList>
            <person name="Cuomo C.A."/>
            <person name="Gueldener U."/>
            <person name="Xu J.-R."/>
            <person name="Trail F."/>
            <person name="Turgeon B.G."/>
            <person name="Di Pietro A."/>
            <person name="Walton J.D."/>
            <person name="Ma L.-J."/>
            <person name="Baker S.E."/>
            <person name="Rep M."/>
            <person name="Adam G."/>
            <person name="Antoniw J."/>
            <person name="Baldwin T."/>
            <person name="Calvo S.E."/>
            <person name="Chang Y.-L."/>
            <person name="DeCaprio D."/>
            <person name="Gale L.R."/>
            <person name="Gnerre S."/>
            <person name="Goswami R.S."/>
            <person name="Hammond-Kosack K."/>
            <person name="Harris L.J."/>
            <person name="Hilburn K."/>
            <person name="Kennell J.C."/>
            <person name="Kroken S."/>
            <person name="Magnuson J.K."/>
            <person name="Mannhaupt G."/>
            <person name="Mauceli E.W."/>
            <person name="Mewes H.-W."/>
            <person name="Mitterbauer R."/>
            <person name="Muehlbauer G."/>
            <person name="Muensterkoetter M."/>
            <person name="Nelson D."/>
            <person name="O'Donnell K."/>
            <person name="Ouellet T."/>
            <person name="Qi W."/>
            <person name="Quesneville H."/>
            <person name="Roncero M.I.G."/>
            <person name="Seong K.-Y."/>
            <person name="Tetko I.V."/>
            <person name="Urban M."/>
            <person name="Waalwijk C."/>
            <person name="Ward T.J."/>
            <person name="Yao J."/>
            <person name="Birren B.W."/>
            <person name="Kistler H.C."/>
        </authorList>
    </citation>
    <scope>NUCLEOTIDE SEQUENCE [LARGE SCALE GENOMIC DNA]</scope>
    <source>
        <strain>ATCC MYA-4620 / CBS 123657 / FGSC 9075 / NRRL 31084 / PH-1</strain>
    </source>
</reference>
<reference key="2">
    <citation type="journal article" date="2010" name="Nature">
        <title>Comparative genomics reveals mobile pathogenicity chromosomes in Fusarium.</title>
        <authorList>
            <person name="Ma L.-J."/>
            <person name="van der Does H.C."/>
            <person name="Borkovich K.A."/>
            <person name="Coleman J.J."/>
            <person name="Daboussi M.-J."/>
            <person name="Di Pietro A."/>
            <person name="Dufresne M."/>
            <person name="Freitag M."/>
            <person name="Grabherr M."/>
            <person name="Henrissat B."/>
            <person name="Houterman P.M."/>
            <person name="Kang S."/>
            <person name="Shim W.-B."/>
            <person name="Woloshuk C."/>
            <person name="Xie X."/>
            <person name="Xu J.-R."/>
            <person name="Antoniw J."/>
            <person name="Baker S.E."/>
            <person name="Bluhm B.H."/>
            <person name="Breakspear A."/>
            <person name="Brown D.W."/>
            <person name="Butchko R.A.E."/>
            <person name="Chapman S."/>
            <person name="Coulson R."/>
            <person name="Coutinho P.M."/>
            <person name="Danchin E.G.J."/>
            <person name="Diener A."/>
            <person name="Gale L.R."/>
            <person name="Gardiner D.M."/>
            <person name="Goff S."/>
            <person name="Hammond-Kosack K.E."/>
            <person name="Hilburn K."/>
            <person name="Hua-Van A."/>
            <person name="Jonkers W."/>
            <person name="Kazan K."/>
            <person name="Kodira C.D."/>
            <person name="Koehrsen M."/>
            <person name="Kumar L."/>
            <person name="Lee Y.-H."/>
            <person name="Li L."/>
            <person name="Manners J.M."/>
            <person name="Miranda-Saavedra D."/>
            <person name="Mukherjee M."/>
            <person name="Park G."/>
            <person name="Park J."/>
            <person name="Park S.-Y."/>
            <person name="Proctor R.H."/>
            <person name="Regev A."/>
            <person name="Ruiz-Roldan M.C."/>
            <person name="Sain D."/>
            <person name="Sakthikumar S."/>
            <person name="Sykes S."/>
            <person name="Schwartz D.C."/>
            <person name="Turgeon B.G."/>
            <person name="Wapinski I."/>
            <person name="Yoder O."/>
            <person name="Young S."/>
            <person name="Zeng Q."/>
            <person name="Zhou S."/>
            <person name="Galagan J."/>
            <person name="Cuomo C.A."/>
            <person name="Kistler H.C."/>
            <person name="Rep M."/>
        </authorList>
    </citation>
    <scope>GENOME REANNOTATION</scope>
    <source>
        <strain>ATCC MYA-4620 / CBS 123657 / FGSC 9075 / NRRL 31084 / PH-1</strain>
    </source>
</reference>
<reference key="3">
    <citation type="journal article" date="2015" name="BMC Genomics">
        <title>The completed genome sequence of the pathogenic ascomycete fungus Fusarium graminearum.</title>
        <authorList>
            <person name="King R."/>
            <person name="Urban M."/>
            <person name="Hammond-Kosack M.C.U."/>
            <person name="Hassani-Pak K."/>
            <person name="Hammond-Kosack K.E."/>
        </authorList>
    </citation>
    <scope>NUCLEOTIDE SEQUENCE [LARGE SCALE GENOMIC DNA]</scope>
    <source>
        <strain>ATCC MYA-4620 / CBS 123657 / FGSC 9075 / NRRL 31084 / PH-1</strain>
    </source>
</reference>
<protein>
    <recommendedName>
        <fullName>Vacuolar protein 8</fullName>
    </recommendedName>
</protein>
<evidence type="ECO:0000250" key="1"/>
<evidence type="ECO:0000255" key="2"/>
<evidence type="ECO:0000305" key="3"/>
<proteinExistence type="inferred from homology"/>